<comment type="function">
    <text evidence="1">Component of the A-type ATP synthase that produces ATP from ADP in the presence of a proton gradient across the membrane.</text>
</comment>
<comment type="subunit">
    <text evidence="1">Has multiple subunits with at least A(3), B(3), C, D, E, F, H, I and proteolipid K(x).</text>
</comment>
<comment type="subcellular location">
    <subcellularLocation>
        <location evidence="1">Cell membrane</location>
        <topology evidence="1">Peripheral membrane protein</topology>
    </subcellularLocation>
</comment>
<comment type="similarity">
    <text evidence="1">Belongs to the V-ATPase E subunit family.</text>
</comment>
<organism>
    <name type="scientific">Methanococcus maripaludis (strain C6 / ATCC BAA-1332)</name>
    <dbReference type="NCBI Taxonomy" id="444158"/>
    <lineage>
        <taxon>Archaea</taxon>
        <taxon>Methanobacteriati</taxon>
        <taxon>Methanobacteriota</taxon>
        <taxon>Methanomada group</taxon>
        <taxon>Methanococci</taxon>
        <taxon>Methanococcales</taxon>
        <taxon>Methanococcaceae</taxon>
        <taxon>Methanococcus</taxon>
    </lineage>
</organism>
<feature type="chain" id="PRO_1000115679" description="A-type ATP synthase subunit E">
    <location>
        <begin position="1"/>
        <end position="203"/>
    </location>
</feature>
<name>AATE_METM6</name>
<gene>
    <name evidence="1" type="primary">atpE</name>
    <name type="ordered locus">MmarC6_1618</name>
</gene>
<keyword id="KW-0066">ATP synthesis</keyword>
<keyword id="KW-1003">Cell membrane</keyword>
<keyword id="KW-0375">Hydrogen ion transport</keyword>
<keyword id="KW-0406">Ion transport</keyword>
<keyword id="KW-0472">Membrane</keyword>
<keyword id="KW-0813">Transport</keyword>
<dbReference type="EMBL" id="CP000867">
    <property type="protein sequence ID" value="ABX02430.1"/>
    <property type="molecule type" value="Genomic_DNA"/>
</dbReference>
<dbReference type="SMR" id="A9AAQ7"/>
<dbReference type="STRING" id="444158.MmarC6_1618"/>
<dbReference type="KEGG" id="mmx:MmarC6_1618"/>
<dbReference type="eggNOG" id="arCOG00869">
    <property type="taxonomic scope" value="Archaea"/>
</dbReference>
<dbReference type="HOGENOM" id="CLU_105846_1_0_2"/>
<dbReference type="OrthoDB" id="4691at2157"/>
<dbReference type="PhylomeDB" id="A9AAQ7"/>
<dbReference type="GO" id="GO:0005886">
    <property type="term" value="C:plasma membrane"/>
    <property type="evidence" value="ECO:0007669"/>
    <property type="project" value="UniProtKB-SubCell"/>
</dbReference>
<dbReference type="GO" id="GO:0033178">
    <property type="term" value="C:proton-transporting two-sector ATPase complex, catalytic domain"/>
    <property type="evidence" value="ECO:0007669"/>
    <property type="project" value="InterPro"/>
</dbReference>
<dbReference type="GO" id="GO:0005524">
    <property type="term" value="F:ATP binding"/>
    <property type="evidence" value="ECO:0007669"/>
    <property type="project" value="UniProtKB-UniRule"/>
</dbReference>
<dbReference type="GO" id="GO:0046933">
    <property type="term" value="F:proton-transporting ATP synthase activity, rotational mechanism"/>
    <property type="evidence" value="ECO:0007669"/>
    <property type="project" value="UniProtKB-UniRule"/>
</dbReference>
<dbReference type="GO" id="GO:0046961">
    <property type="term" value="F:proton-transporting ATPase activity, rotational mechanism"/>
    <property type="evidence" value="ECO:0007669"/>
    <property type="project" value="InterPro"/>
</dbReference>
<dbReference type="GO" id="GO:0042777">
    <property type="term" value="P:proton motive force-driven plasma membrane ATP synthesis"/>
    <property type="evidence" value="ECO:0007669"/>
    <property type="project" value="UniProtKB-UniRule"/>
</dbReference>
<dbReference type="Gene3D" id="3.30.2320.30">
    <property type="entry name" value="ATP synthase, E subunit, C-terminal"/>
    <property type="match status" value="1"/>
</dbReference>
<dbReference type="Gene3D" id="1.20.5.620">
    <property type="entry name" value="F1F0 ATP synthase subunit B, membrane domain"/>
    <property type="match status" value="1"/>
</dbReference>
<dbReference type="HAMAP" id="MF_00311">
    <property type="entry name" value="ATP_synth_E_arch"/>
    <property type="match status" value="1"/>
</dbReference>
<dbReference type="InterPro" id="IPR038495">
    <property type="entry name" value="ATPase_E_C"/>
</dbReference>
<dbReference type="InterPro" id="IPR002842">
    <property type="entry name" value="ATPase_V1_Esu"/>
</dbReference>
<dbReference type="PANTHER" id="PTHR45715">
    <property type="entry name" value="ATPASE H+-TRANSPORTING V1 SUBUNIT E1A-RELATED"/>
    <property type="match status" value="1"/>
</dbReference>
<dbReference type="Pfam" id="PF01991">
    <property type="entry name" value="vATP-synt_E"/>
    <property type="match status" value="1"/>
</dbReference>
<dbReference type="SUPFAM" id="SSF160527">
    <property type="entry name" value="V-type ATPase subunit E-like"/>
    <property type="match status" value="1"/>
</dbReference>
<reference key="1">
    <citation type="submission" date="2007-10" db="EMBL/GenBank/DDBJ databases">
        <title>Complete sequence of Methanococcus maripaludis C6.</title>
        <authorList>
            <consortium name="US DOE Joint Genome Institute"/>
            <person name="Copeland A."/>
            <person name="Lucas S."/>
            <person name="Lapidus A."/>
            <person name="Barry K."/>
            <person name="Glavina del Rio T."/>
            <person name="Dalin E."/>
            <person name="Tice H."/>
            <person name="Pitluck S."/>
            <person name="Clum A."/>
            <person name="Schmutz J."/>
            <person name="Larimer F."/>
            <person name="Land M."/>
            <person name="Hauser L."/>
            <person name="Kyrpides N."/>
            <person name="Mikhailova N."/>
            <person name="Sieprawska-Lupa M."/>
            <person name="Whitman W.B."/>
            <person name="Richardson P."/>
        </authorList>
    </citation>
    <scope>NUCLEOTIDE SEQUENCE [LARGE SCALE GENOMIC DNA]</scope>
    <source>
        <strain>C6 / ATCC BAA-1332</strain>
    </source>
</reference>
<proteinExistence type="inferred from homology"/>
<sequence length="203" mass="22760">MGAEKITSKIVEDANKNAEKILAEALNEKEAILTEAKEEASKKEQAIAKKGEKDAEMTKNRILAEARLSAKKKLLEEREKTIQLTLEKLEEDLVKLPQKDEYKDTLLKLIISGVYSVGGGELELLLNKKDFEVIDDSTLWALEKEMEDRLKKVTVLKKGEAKSIIGGCIIKTADHTKVSDNSLEATFERNLDSVRAKIAEMLF</sequence>
<evidence type="ECO:0000255" key="1">
    <source>
        <dbReference type="HAMAP-Rule" id="MF_00311"/>
    </source>
</evidence>
<protein>
    <recommendedName>
        <fullName evidence="1">A-type ATP synthase subunit E</fullName>
    </recommendedName>
</protein>
<accession>A9AAQ7</accession>